<name>EST3_PONAB</name>
<evidence type="ECO:0000250" key="1"/>
<evidence type="ECO:0000255" key="2"/>
<evidence type="ECO:0000255" key="3">
    <source>
        <dbReference type="PROSITE-ProRule" id="PRU10039"/>
    </source>
</evidence>
<evidence type="ECO:0000305" key="4"/>
<keyword id="KW-1015">Disulfide bond</keyword>
<keyword id="KW-0256">Endoplasmic reticulum</keyword>
<keyword id="KW-0325">Glycoprotein</keyword>
<keyword id="KW-0378">Hydrolase</keyword>
<keyword id="KW-1185">Reference proteome</keyword>
<keyword id="KW-0719">Serine esterase</keyword>
<keyword id="KW-0732">Signal</keyword>
<sequence length="569" mass="62439">MRLHRLRARLNAVAFGLLLLLVHGQGPEIVQPEVDTTLGRVRGRQVGVKGTDRLVNVFLGIPFAQPPLGPDRFSAPHPAQPWEGVRDASAAPPMCLQDVESMNNSRFVLNGKQQIFSVSEDCLVLNIYSPAEATAGAGRPVMVWVHGGALITGAATSYDGSALAAYGDVVVVTVQYRLGVLGFFSTGDEHAPGNQGFLDVVAALRWVQGNITPFGGDLNCVTVFGGSAGGSIVSGLVLSPMAAGLFHRAITQSGVITTPGIIESHPWPLAQKITNTLACSSSSPAEMVQCLRQKEGEELVLSKKLKSTIYPLTVDGTVFPKSPKELLKEKPFHSVPFLMGVNNHEFSWLIPRGWGLLDTMEQMSREDMLAISTPVLTSLDVPPEMMPTVIDEYLGSNSDAQAKCLAFQEFMGDVFINVPTVSFSRYLRDSGSPVFFYEFQHRPSSFAKIKPAWVKADHAAEGAFVFGGPFLMDESSRLAFPEATEEEKQLSLTMMAQWTHFARTGDPNSKGLPPWPRFNQAEQYLEINPVPRAGQKFRETRMQFWSETLPSKIQQWHQKQKNRKAQEDL</sequence>
<organism>
    <name type="scientific">Pongo abelii</name>
    <name type="common">Sumatran orangutan</name>
    <name type="synonym">Pongo pygmaeus abelii</name>
    <dbReference type="NCBI Taxonomy" id="9601"/>
    <lineage>
        <taxon>Eukaryota</taxon>
        <taxon>Metazoa</taxon>
        <taxon>Chordata</taxon>
        <taxon>Craniata</taxon>
        <taxon>Vertebrata</taxon>
        <taxon>Euteleostomi</taxon>
        <taxon>Mammalia</taxon>
        <taxon>Eutheria</taxon>
        <taxon>Euarchontoglires</taxon>
        <taxon>Primates</taxon>
        <taxon>Haplorrhini</taxon>
        <taxon>Catarrhini</taxon>
        <taxon>Hominidae</taxon>
        <taxon>Pongo</taxon>
    </lineage>
</organism>
<reference key="1">
    <citation type="submission" date="2004-11" db="EMBL/GenBank/DDBJ databases">
        <authorList>
            <consortium name="The German cDNA consortium"/>
        </authorList>
    </citation>
    <scope>NUCLEOTIDE SEQUENCE [LARGE SCALE MRNA]</scope>
    <source>
        <tissue>Kidney</tissue>
    </source>
</reference>
<comment type="function">
    <text evidence="1">Involved in the detoxification of xenobiotics and in the activation of ester and amide prodrugs.</text>
</comment>
<comment type="catalytic activity">
    <reaction evidence="3">
        <text>a carboxylic ester + H2O = an alcohol + a carboxylate + H(+)</text>
        <dbReference type="Rhea" id="RHEA:21164"/>
        <dbReference type="ChEBI" id="CHEBI:15377"/>
        <dbReference type="ChEBI" id="CHEBI:15378"/>
        <dbReference type="ChEBI" id="CHEBI:29067"/>
        <dbReference type="ChEBI" id="CHEBI:30879"/>
        <dbReference type="ChEBI" id="CHEBI:33308"/>
        <dbReference type="EC" id="3.1.1.1"/>
    </reaction>
</comment>
<comment type="subcellular location">
    <subcellularLocation>
        <location evidence="1">Endoplasmic reticulum lumen</location>
    </subcellularLocation>
</comment>
<comment type="PTM">
    <text>N-glycosylated.</text>
</comment>
<comment type="similarity">
    <text evidence="4">Belongs to the type-B carboxylesterase/lipase family.</text>
</comment>
<dbReference type="EC" id="3.1.1.1"/>
<dbReference type="EMBL" id="CR857194">
    <property type="protein sequence ID" value="CAH89493.1"/>
    <property type="molecule type" value="mRNA"/>
</dbReference>
<dbReference type="EMBL" id="CR858253">
    <property type="protein sequence ID" value="CAH90490.1"/>
    <property type="molecule type" value="mRNA"/>
</dbReference>
<dbReference type="RefSeq" id="NP_001125256.1">
    <property type="nucleotide sequence ID" value="NM_001131784.1"/>
</dbReference>
<dbReference type="RefSeq" id="NP_001128738.1">
    <property type="nucleotide sequence ID" value="NM_001135266.1"/>
</dbReference>
<dbReference type="SMR" id="Q5RCL7"/>
<dbReference type="FunCoup" id="Q5RCL7">
    <property type="interactions" value="255"/>
</dbReference>
<dbReference type="STRING" id="9601.ENSPPYP00000008401"/>
<dbReference type="ESTHER" id="ponab-est3">
    <property type="family name" value="Carb_B_Chordata"/>
</dbReference>
<dbReference type="GlyCosmos" id="Q5RCL7">
    <property type="glycosylation" value="1 site, No reported glycans"/>
</dbReference>
<dbReference type="GeneID" id="100172153"/>
<dbReference type="KEGG" id="pon:100172153"/>
<dbReference type="CTD" id="23491"/>
<dbReference type="eggNOG" id="KOG1516">
    <property type="taxonomic scope" value="Eukaryota"/>
</dbReference>
<dbReference type="InParanoid" id="Q5RCL7"/>
<dbReference type="OrthoDB" id="3200163at2759"/>
<dbReference type="Proteomes" id="UP000001595">
    <property type="component" value="Unplaced"/>
</dbReference>
<dbReference type="GO" id="GO:0005788">
    <property type="term" value="C:endoplasmic reticulum lumen"/>
    <property type="evidence" value="ECO:0007669"/>
    <property type="project" value="UniProtKB-SubCell"/>
</dbReference>
<dbReference type="GO" id="GO:0106435">
    <property type="term" value="F:carboxylesterase activity"/>
    <property type="evidence" value="ECO:0007669"/>
    <property type="project" value="UniProtKB-EC"/>
</dbReference>
<dbReference type="CDD" id="cd00312">
    <property type="entry name" value="Esterase_lipase"/>
    <property type="match status" value="1"/>
</dbReference>
<dbReference type="FunFam" id="3.40.50.1820:FF:000011">
    <property type="entry name" value="Carboxylic ester hydrolase"/>
    <property type="match status" value="1"/>
</dbReference>
<dbReference type="Gene3D" id="3.40.50.1820">
    <property type="entry name" value="alpha/beta hydrolase"/>
    <property type="match status" value="1"/>
</dbReference>
<dbReference type="InterPro" id="IPR029058">
    <property type="entry name" value="AB_hydrolase_fold"/>
</dbReference>
<dbReference type="InterPro" id="IPR002018">
    <property type="entry name" value="CarbesteraseB"/>
</dbReference>
<dbReference type="InterPro" id="IPR019826">
    <property type="entry name" value="Carboxylesterase_B_AS"/>
</dbReference>
<dbReference type="InterPro" id="IPR050309">
    <property type="entry name" value="Type-B_Carboxylest/Lipase"/>
</dbReference>
<dbReference type="PANTHER" id="PTHR11559">
    <property type="entry name" value="CARBOXYLESTERASE"/>
    <property type="match status" value="1"/>
</dbReference>
<dbReference type="Pfam" id="PF00135">
    <property type="entry name" value="COesterase"/>
    <property type="match status" value="1"/>
</dbReference>
<dbReference type="SUPFAM" id="SSF53474">
    <property type="entry name" value="alpha/beta-Hydrolases"/>
    <property type="match status" value="1"/>
</dbReference>
<dbReference type="PROSITE" id="PS00122">
    <property type="entry name" value="CARBOXYLESTERASE_B_1"/>
    <property type="match status" value="1"/>
</dbReference>
<accession>Q5RCL7</accession>
<accession>Q5RFG4</accession>
<feature type="signal peptide" evidence="2">
    <location>
        <begin position="1"/>
        <end position="24"/>
    </location>
</feature>
<feature type="chain" id="PRO_0000305192" description="Carboxylesterase 3">
    <location>
        <begin position="25"/>
        <end position="569"/>
    </location>
</feature>
<feature type="short sequence motif" description="Prevents secretion from ER" evidence="2">
    <location>
        <begin position="566"/>
        <end position="569"/>
    </location>
</feature>
<feature type="active site" description="Acyl-ester intermediate" evidence="3">
    <location>
        <position position="227"/>
    </location>
</feature>
<feature type="active site" description="Charge relay system" evidence="1">
    <location>
        <position position="345"/>
    </location>
</feature>
<feature type="active site" description="Charge relay system" evidence="1">
    <location>
        <position position="458"/>
    </location>
</feature>
<feature type="glycosylation site" description="N-linked (GlcNAc...) asparagine" evidence="2">
    <location>
        <position position="103"/>
    </location>
</feature>
<feature type="disulfide bond" evidence="1">
    <location>
        <begin position="95"/>
        <end position="122"/>
    </location>
</feature>
<feature type="disulfide bond" evidence="1">
    <location>
        <begin position="279"/>
        <end position="290"/>
    </location>
</feature>
<feature type="sequence conflict" description="In Ref. 1; CAH89493." evidence="4" ref="1">
    <original>H</original>
    <variation>R</variation>
    <location>
        <position position="333"/>
    </location>
</feature>
<feature type="sequence conflict" description="In Ref. 1; CAH89493." evidence="4" ref="1">
    <original>C</original>
    <variation>F</variation>
    <location>
        <position position="404"/>
    </location>
</feature>
<feature type="sequence conflict" description="In Ref. 1; CAH89493." evidence="4" ref="1">
    <original>V</original>
    <variation>F</variation>
    <location>
        <position position="421"/>
    </location>
</feature>
<feature type="sequence conflict" description="In Ref. 1; CAH89493." evidence="4" ref="1">
    <original>E</original>
    <variation>G</variation>
    <location>
        <position position="482"/>
    </location>
</feature>
<feature type="sequence conflict" description="In Ref. 1; CAH90490." evidence="4" ref="1">
    <original>W</original>
    <variation>R</variation>
    <location>
        <position position="515"/>
    </location>
</feature>
<feature type="sequence conflict" description="In Ref. 1; CAH89493." evidence="4" ref="1">
    <original>H</original>
    <variation>Q</variation>
    <location>
        <position position="557"/>
    </location>
</feature>
<proteinExistence type="evidence at transcript level"/>
<protein>
    <recommendedName>
        <fullName>Carboxylesterase 3</fullName>
        <ecNumber>3.1.1.1</ecNumber>
    </recommendedName>
    <alternativeName>
        <fullName>Liver carboxylesterase 31 homolog</fullName>
    </alternativeName>
</protein>
<gene>
    <name type="primary">CES3</name>
</gene>